<accession>Q6PHG2</accession>
<accession>A9JSW7</accession>
<name>HEMO_DANRE</name>
<keyword id="KW-0325">Glycoprotein</keyword>
<keyword id="KW-0349">Heme</keyword>
<keyword id="KW-0408">Iron</keyword>
<keyword id="KW-0479">Metal-binding</keyword>
<keyword id="KW-1185">Reference proteome</keyword>
<keyword id="KW-0677">Repeat</keyword>
<keyword id="KW-0964">Secreted</keyword>
<keyword id="KW-0732">Signal</keyword>
<keyword id="KW-0813">Transport</keyword>
<protein>
    <recommendedName>
        <fullName evidence="1">Hemopexin</fullName>
    </recommendedName>
</protein>
<feature type="signal peptide" evidence="2">
    <location>
        <begin position="1"/>
        <end position="18"/>
    </location>
</feature>
<feature type="chain" id="PRO_0000382471" description="Hemopexin" evidence="2">
    <location>
        <begin position="19"/>
        <end position="447"/>
    </location>
</feature>
<feature type="repeat" description="Hemopexin 1">
    <location>
        <begin position="53"/>
        <end position="93"/>
    </location>
</feature>
<feature type="repeat" description="Hemopexin 2">
    <location>
        <begin position="99"/>
        <end position="151"/>
    </location>
</feature>
<feature type="repeat" description="Hemopexin 3">
    <location>
        <begin position="152"/>
        <end position="197"/>
    </location>
</feature>
<feature type="repeat" description="Hemopexin 4">
    <location>
        <begin position="198"/>
        <end position="243"/>
    </location>
</feature>
<feature type="repeat" description="Hemopexin 5">
    <location>
        <begin position="262"/>
        <end position="304"/>
    </location>
</feature>
<feature type="repeat" description="Hemopexin 6">
    <location>
        <begin position="305"/>
        <end position="351"/>
    </location>
</feature>
<feature type="repeat" description="Hemopexin 7">
    <location>
        <begin position="352"/>
        <end position="395"/>
    </location>
</feature>
<feature type="repeat" description="Hemopexin 8">
    <location>
        <begin position="396"/>
        <end position="441"/>
    </location>
</feature>
<feature type="region of interest" description="Disordered" evidence="3">
    <location>
        <begin position="20"/>
        <end position="44"/>
    </location>
</feature>
<feature type="compositionally biased region" description="Basic and acidic residues" evidence="3">
    <location>
        <begin position="22"/>
        <end position="44"/>
    </location>
</feature>
<feature type="binding site" description="axial binding residue" evidence="1">
    <location>
        <position position="293"/>
    </location>
    <ligand>
        <name>heme</name>
        <dbReference type="ChEBI" id="CHEBI:30413"/>
        <label>2</label>
    </ligand>
    <ligandPart>
        <name>Fe</name>
        <dbReference type="ChEBI" id="CHEBI:18248"/>
    </ligandPart>
</feature>
<feature type="glycosylation site" description="N-linked (GlcNAc...) asparagine" evidence="2">
    <location>
        <position position="87"/>
    </location>
</feature>
<feature type="glycosylation site" description="N-linked (GlcNAc...) asparagine" evidence="2">
    <location>
        <position position="168"/>
    </location>
</feature>
<feature type="glycosylation site" description="N-linked (GlcNAc...) asparagine" evidence="2">
    <location>
        <position position="199"/>
    </location>
</feature>
<feature type="sequence conflict" description="In Ref. 1; AAI55108." evidence="4" ref="1">
    <original>E</original>
    <variation>A</variation>
    <location>
        <position position="362"/>
    </location>
</feature>
<feature type="sequence conflict" description="In Ref. 1; AAI55108." evidence="4" ref="1">
    <original>A</original>
    <variation>T</variation>
    <location>
        <position position="401"/>
    </location>
</feature>
<gene>
    <name evidence="6 7" type="primary">hpx</name>
</gene>
<dbReference type="EMBL" id="BC056563">
    <property type="protein sequence ID" value="AAH56563.2"/>
    <property type="molecule type" value="mRNA"/>
</dbReference>
<dbReference type="EMBL" id="BC155107">
    <property type="protein sequence ID" value="AAI55108.1"/>
    <property type="molecule type" value="mRNA"/>
</dbReference>
<dbReference type="RefSeq" id="NP_001315463.1">
    <property type="nucleotide sequence ID" value="NM_001328534.1"/>
</dbReference>
<dbReference type="SMR" id="Q6PHG2"/>
<dbReference type="FunCoup" id="Q6PHG2">
    <property type="interactions" value="2389"/>
</dbReference>
<dbReference type="STRING" id="7955.ENSDARP00000111337"/>
<dbReference type="GlyCosmos" id="Q6PHG2">
    <property type="glycosylation" value="3 sites, No reported glycans"/>
</dbReference>
<dbReference type="PaxDb" id="7955-ENSDARP00000111337"/>
<dbReference type="Ensembl" id="ENSDART00000121506">
    <property type="protein sequence ID" value="ENSDARP00000111337"/>
    <property type="gene ID" value="ENSDARG00000012609"/>
</dbReference>
<dbReference type="GeneID" id="327588"/>
<dbReference type="KEGG" id="dre:327588"/>
<dbReference type="AGR" id="ZFIN:ZDB-GENE-030131-5773"/>
<dbReference type="CTD" id="327588"/>
<dbReference type="ZFIN" id="ZDB-GENE-030131-5773">
    <property type="gene designation" value="hpxa"/>
</dbReference>
<dbReference type="eggNOG" id="KOG1565">
    <property type="taxonomic scope" value="Eukaryota"/>
</dbReference>
<dbReference type="HOGENOM" id="CLU_061713_0_0_1"/>
<dbReference type="InParanoid" id="Q6PHG2"/>
<dbReference type="OMA" id="GSGNDNH"/>
<dbReference type="OrthoDB" id="8953614at2759"/>
<dbReference type="PhylomeDB" id="Q6PHG2"/>
<dbReference type="TreeFam" id="TF331201"/>
<dbReference type="PRO" id="PR:Q6PHG2"/>
<dbReference type="Proteomes" id="UP000000437">
    <property type="component" value="Chromosome 9"/>
</dbReference>
<dbReference type="Bgee" id="ENSDARG00000012609">
    <property type="expression patterns" value="Expressed in liver and 16 other cell types or tissues"/>
</dbReference>
<dbReference type="GO" id="GO:0062023">
    <property type="term" value="C:collagen-containing extracellular matrix"/>
    <property type="evidence" value="ECO:0000318"/>
    <property type="project" value="GO_Central"/>
</dbReference>
<dbReference type="GO" id="GO:0005615">
    <property type="term" value="C:extracellular space"/>
    <property type="evidence" value="ECO:0000318"/>
    <property type="project" value="GO_Central"/>
</dbReference>
<dbReference type="GO" id="GO:0015232">
    <property type="term" value="F:heme transmembrane transporter activity"/>
    <property type="evidence" value="ECO:0007669"/>
    <property type="project" value="InterPro"/>
</dbReference>
<dbReference type="GO" id="GO:0046872">
    <property type="term" value="F:metal ion binding"/>
    <property type="evidence" value="ECO:0007669"/>
    <property type="project" value="UniProtKB-KW"/>
</dbReference>
<dbReference type="GO" id="GO:0071391">
    <property type="term" value="P:cellular response to estrogen stimulus"/>
    <property type="evidence" value="ECO:0000314"/>
    <property type="project" value="ZFIN"/>
</dbReference>
<dbReference type="GO" id="GO:0006879">
    <property type="term" value="P:intracellular iron ion homeostasis"/>
    <property type="evidence" value="ECO:0007669"/>
    <property type="project" value="InterPro"/>
</dbReference>
<dbReference type="CDD" id="cd00094">
    <property type="entry name" value="HX"/>
    <property type="match status" value="1"/>
</dbReference>
<dbReference type="FunFam" id="2.110.10.10:FF:000009">
    <property type="entry name" value="Hemopexin"/>
    <property type="match status" value="1"/>
</dbReference>
<dbReference type="FunFam" id="2.110.10.10:FF:000020">
    <property type="entry name" value="Hemopexin"/>
    <property type="match status" value="1"/>
</dbReference>
<dbReference type="Gene3D" id="2.110.10.10">
    <property type="entry name" value="Hemopexin-like domain"/>
    <property type="match status" value="2"/>
</dbReference>
<dbReference type="InterPro" id="IPR051298">
    <property type="entry name" value="Heme_transport/Cell_adhesion"/>
</dbReference>
<dbReference type="InterPro" id="IPR016358">
    <property type="entry name" value="Hemopexin"/>
</dbReference>
<dbReference type="InterPro" id="IPR000585">
    <property type="entry name" value="Hemopexin-like_dom"/>
</dbReference>
<dbReference type="InterPro" id="IPR036375">
    <property type="entry name" value="Hemopexin-like_dom_sf"/>
</dbReference>
<dbReference type="InterPro" id="IPR018487">
    <property type="entry name" value="Hemopexin-like_repeat"/>
</dbReference>
<dbReference type="PANTHER" id="PTHR22917:SF10">
    <property type="entry name" value="HEMOPEXIN"/>
    <property type="match status" value="1"/>
</dbReference>
<dbReference type="PANTHER" id="PTHR22917">
    <property type="entry name" value="HEMOPEXIN DOMAIN-CONTAINING PROTEIN"/>
    <property type="match status" value="1"/>
</dbReference>
<dbReference type="PIRSF" id="PIRSF002551">
    <property type="entry name" value="Hemopexin_chordata"/>
    <property type="match status" value="1"/>
</dbReference>
<dbReference type="SMART" id="SM00120">
    <property type="entry name" value="HX"/>
    <property type="match status" value="5"/>
</dbReference>
<dbReference type="SUPFAM" id="SSF50923">
    <property type="entry name" value="Hemopexin-like domain"/>
    <property type="match status" value="2"/>
</dbReference>
<dbReference type="PROSITE" id="PS51642">
    <property type="entry name" value="HEMOPEXIN_2"/>
    <property type="match status" value="8"/>
</dbReference>
<reference evidence="5" key="1">
    <citation type="submission" date="2007-11" db="EMBL/GenBank/DDBJ databases">
        <authorList>
            <consortium name="NIH - Zebrafish Gene Collection (ZGC) project"/>
        </authorList>
    </citation>
    <scope>NUCLEOTIDE SEQUENCE [LARGE SCALE MRNA]</scope>
    <source>
        <tissue evidence="5">Kidney</tissue>
    </source>
</reference>
<evidence type="ECO:0000250" key="1">
    <source>
        <dbReference type="UniProtKB" id="P20058"/>
    </source>
</evidence>
<evidence type="ECO:0000255" key="2"/>
<evidence type="ECO:0000256" key="3">
    <source>
        <dbReference type="SAM" id="MobiDB-lite"/>
    </source>
</evidence>
<evidence type="ECO:0000305" key="4"/>
<evidence type="ECO:0000312" key="5">
    <source>
        <dbReference type="EMBL" id="AAH56563.2"/>
    </source>
</evidence>
<evidence type="ECO:0000312" key="6">
    <source>
        <dbReference type="EMBL" id="AAI55108.1"/>
    </source>
</evidence>
<evidence type="ECO:0000312" key="7">
    <source>
        <dbReference type="ZFIN" id="ZDB-GENE-030131-5773"/>
    </source>
</evidence>
<organism>
    <name type="scientific">Danio rerio</name>
    <name type="common">Zebrafish</name>
    <name type="synonym">Brachydanio rerio</name>
    <dbReference type="NCBI Taxonomy" id="7955"/>
    <lineage>
        <taxon>Eukaryota</taxon>
        <taxon>Metazoa</taxon>
        <taxon>Chordata</taxon>
        <taxon>Craniata</taxon>
        <taxon>Vertebrata</taxon>
        <taxon>Euteleostomi</taxon>
        <taxon>Actinopterygii</taxon>
        <taxon>Neopterygii</taxon>
        <taxon>Teleostei</taxon>
        <taxon>Ostariophysi</taxon>
        <taxon>Cypriniformes</taxon>
        <taxon>Danionidae</taxon>
        <taxon>Danioninae</taxon>
        <taxon>Danio</taxon>
    </lineage>
</organism>
<sequence length="447" mass="51027">MRLIQALSLCLALSLSLAAPPQHKEDHSHKGKPGGEGHKHELHHGAQLDRCKGIEFDAVAVNEEGVPYFFKGDHLFKGFHGKAELSNKTFPELDDHHHLGHVDAAFRMHSEDSPDHHDHQFFFLDNMVFSYFKHKLEKDYPKLISAVFPGIPDHLDAAVECPKPDCPNDTVIFFKGDEIYHFNMHTKKVDEKEFKSMPNCTGAFRYMGHYYCFHGHQFSKFDPMTGEVHGKYPKEARDYFMRCPHFGSKTTDDHIEREQCSRVHLDAITSDDAGNIYAFRGHHFLSITGDKFHSDTIESEFKELHSEVDSVFSYDGHFYMIKDNDVFVYKVGKPHTHLEGYPKPLKDVLGIEGPVDAAFVCEDHHVVHIIKGQSIYDVDLKATPRKLVKEGTITQFKRIDAAMCGPKGVTVVIGNHFYNYDSVQVMLMAKIMPEQQKVSQQLFGCDH</sequence>
<proteinExistence type="evidence at transcript level"/>
<comment type="function">
    <text evidence="1">Binds heme and transports it to the liver for breakdown and iron recovery, after which the free hemopexin returns to the circulation.</text>
</comment>
<comment type="subcellular location">
    <subcellularLocation>
        <location evidence="1">Secreted</location>
    </subcellularLocation>
</comment>
<comment type="similarity">
    <text evidence="2">Belongs to the hemopexin family.</text>
</comment>